<organism>
    <name type="scientific">Ralstonia pickettii (strain 12J)</name>
    <dbReference type="NCBI Taxonomy" id="402626"/>
    <lineage>
        <taxon>Bacteria</taxon>
        <taxon>Pseudomonadati</taxon>
        <taxon>Pseudomonadota</taxon>
        <taxon>Betaproteobacteria</taxon>
        <taxon>Burkholderiales</taxon>
        <taxon>Burkholderiaceae</taxon>
        <taxon>Ralstonia</taxon>
    </lineage>
</organism>
<accession>B2U7B1</accession>
<comment type="function">
    <text evidence="1">Catalyzes the condensation of carbamoyl phosphate and aspartate to form carbamoyl aspartate and inorganic phosphate, the committed step in the de novo pyrimidine nucleotide biosynthesis pathway.</text>
</comment>
<comment type="catalytic activity">
    <reaction evidence="1">
        <text>carbamoyl phosphate + L-aspartate = N-carbamoyl-L-aspartate + phosphate + H(+)</text>
        <dbReference type="Rhea" id="RHEA:20013"/>
        <dbReference type="ChEBI" id="CHEBI:15378"/>
        <dbReference type="ChEBI" id="CHEBI:29991"/>
        <dbReference type="ChEBI" id="CHEBI:32814"/>
        <dbReference type="ChEBI" id="CHEBI:43474"/>
        <dbReference type="ChEBI" id="CHEBI:58228"/>
        <dbReference type="EC" id="2.1.3.2"/>
    </reaction>
</comment>
<comment type="pathway">
    <text evidence="1">Pyrimidine metabolism; UMP biosynthesis via de novo pathway; (S)-dihydroorotate from bicarbonate: step 2/3.</text>
</comment>
<comment type="subunit">
    <text evidence="1">Heterododecamer (2C3:3R2) of six catalytic PyrB chains organized as two trimers (C3), and six regulatory PyrI chains organized as three dimers (R2).</text>
</comment>
<comment type="similarity">
    <text evidence="1">Belongs to the aspartate/ornithine carbamoyltransferase superfamily. ATCase family.</text>
</comment>
<keyword id="KW-0665">Pyrimidine biosynthesis</keyword>
<keyword id="KW-0808">Transferase</keyword>
<proteinExistence type="inferred from homology"/>
<dbReference type="EC" id="2.1.3.2" evidence="1"/>
<dbReference type="EMBL" id="CP001068">
    <property type="protein sequence ID" value="ACD25773.1"/>
    <property type="molecule type" value="Genomic_DNA"/>
</dbReference>
<dbReference type="SMR" id="B2U7B1"/>
<dbReference type="STRING" id="402626.Rpic_0622"/>
<dbReference type="KEGG" id="rpi:Rpic_0622"/>
<dbReference type="eggNOG" id="COG0540">
    <property type="taxonomic scope" value="Bacteria"/>
</dbReference>
<dbReference type="HOGENOM" id="CLU_043846_2_0_4"/>
<dbReference type="UniPathway" id="UPA00070">
    <property type="reaction ID" value="UER00116"/>
</dbReference>
<dbReference type="GO" id="GO:0005829">
    <property type="term" value="C:cytosol"/>
    <property type="evidence" value="ECO:0007669"/>
    <property type="project" value="TreeGrafter"/>
</dbReference>
<dbReference type="GO" id="GO:0016597">
    <property type="term" value="F:amino acid binding"/>
    <property type="evidence" value="ECO:0007669"/>
    <property type="project" value="InterPro"/>
</dbReference>
<dbReference type="GO" id="GO:0004070">
    <property type="term" value="F:aspartate carbamoyltransferase activity"/>
    <property type="evidence" value="ECO:0007669"/>
    <property type="project" value="UniProtKB-UniRule"/>
</dbReference>
<dbReference type="GO" id="GO:0006207">
    <property type="term" value="P:'de novo' pyrimidine nucleobase biosynthetic process"/>
    <property type="evidence" value="ECO:0007669"/>
    <property type="project" value="InterPro"/>
</dbReference>
<dbReference type="GO" id="GO:0044205">
    <property type="term" value="P:'de novo' UMP biosynthetic process"/>
    <property type="evidence" value="ECO:0007669"/>
    <property type="project" value="UniProtKB-UniRule"/>
</dbReference>
<dbReference type="GO" id="GO:0006520">
    <property type="term" value="P:amino acid metabolic process"/>
    <property type="evidence" value="ECO:0007669"/>
    <property type="project" value="InterPro"/>
</dbReference>
<dbReference type="FunFam" id="3.40.50.1370:FF:000007">
    <property type="entry name" value="Aspartate carbamoyltransferase"/>
    <property type="match status" value="1"/>
</dbReference>
<dbReference type="Gene3D" id="3.40.50.1370">
    <property type="entry name" value="Aspartate/ornithine carbamoyltransferase"/>
    <property type="match status" value="2"/>
</dbReference>
<dbReference type="HAMAP" id="MF_00001">
    <property type="entry name" value="Asp_carb_tr"/>
    <property type="match status" value="1"/>
</dbReference>
<dbReference type="InterPro" id="IPR006132">
    <property type="entry name" value="Asp/Orn_carbamoyltranf_P-bd"/>
</dbReference>
<dbReference type="InterPro" id="IPR006130">
    <property type="entry name" value="Asp/Orn_carbamoylTrfase"/>
</dbReference>
<dbReference type="InterPro" id="IPR036901">
    <property type="entry name" value="Asp/Orn_carbamoylTrfase_sf"/>
</dbReference>
<dbReference type="InterPro" id="IPR002082">
    <property type="entry name" value="Asp_carbamoyltransf"/>
</dbReference>
<dbReference type="InterPro" id="IPR006131">
    <property type="entry name" value="Asp_carbamoyltransf_Asp/Orn-bd"/>
</dbReference>
<dbReference type="NCBIfam" id="TIGR00670">
    <property type="entry name" value="asp_carb_tr"/>
    <property type="match status" value="1"/>
</dbReference>
<dbReference type="NCBIfam" id="NF002032">
    <property type="entry name" value="PRK00856.1"/>
    <property type="match status" value="1"/>
</dbReference>
<dbReference type="PANTHER" id="PTHR45753:SF6">
    <property type="entry name" value="ASPARTATE CARBAMOYLTRANSFERASE"/>
    <property type="match status" value="1"/>
</dbReference>
<dbReference type="PANTHER" id="PTHR45753">
    <property type="entry name" value="ORNITHINE CARBAMOYLTRANSFERASE, MITOCHONDRIAL"/>
    <property type="match status" value="1"/>
</dbReference>
<dbReference type="Pfam" id="PF00185">
    <property type="entry name" value="OTCace"/>
    <property type="match status" value="1"/>
</dbReference>
<dbReference type="Pfam" id="PF02729">
    <property type="entry name" value="OTCace_N"/>
    <property type="match status" value="1"/>
</dbReference>
<dbReference type="PRINTS" id="PR00100">
    <property type="entry name" value="AOTCASE"/>
</dbReference>
<dbReference type="PRINTS" id="PR00101">
    <property type="entry name" value="ATCASE"/>
</dbReference>
<dbReference type="SUPFAM" id="SSF53671">
    <property type="entry name" value="Aspartate/ornithine carbamoyltransferase"/>
    <property type="match status" value="1"/>
</dbReference>
<dbReference type="PROSITE" id="PS00097">
    <property type="entry name" value="CARBAMOYLTRANSFERASE"/>
    <property type="match status" value="1"/>
</dbReference>
<feature type="chain" id="PRO_1000088789" description="Aspartate carbamoyltransferase catalytic subunit">
    <location>
        <begin position="1"/>
        <end position="323"/>
    </location>
</feature>
<feature type="binding site" evidence="1">
    <location>
        <position position="71"/>
    </location>
    <ligand>
        <name>carbamoyl phosphate</name>
        <dbReference type="ChEBI" id="CHEBI:58228"/>
    </ligand>
</feature>
<feature type="binding site" evidence="1">
    <location>
        <position position="72"/>
    </location>
    <ligand>
        <name>carbamoyl phosphate</name>
        <dbReference type="ChEBI" id="CHEBI:58228"/>
    </ligand>
</feature>
<feature type="binding site" evidence="1">
    <location>
        <position position="99"/>
    </location>
    <ligand>
        <name>L-aspartate</name>
        <dbReference type="ChEBI" id="CHEBI:29991"/>
    </ligand>
</feature>
<feature type="binding site" evidence="1">
    <location>
        <position position="121"/>
    </location>
    <ligand>
        <name>carbamoyl phosphate</name>
        <dbReference type="ChEBI" id="CHEBI:58228"/>
    </ligand>
</feature>
<feature type="binding site" evidence="1">
    <location>
        <position position="151"/>
    </location>
    <ligand>
        <name>carbamoyl phosphate</name>
        <dbReference type="ChEBI" id="CHEBI:58228"/>
    </ligand>
</feature>
<feature type="binding site" evidence="1">
    <location>
        <position position="154"/>
    </location>
    <ligand>
        <name>carbamoyl phosphate</name>
        <dbReference type="ChEBI" id="CHEBI:58228"/>
    </ligand>
</feature>
<feature type="binding site" evidence="1">
    <location>
        <position position="184"/>
    </location>
    <ligand>
        <name>L-aspartate</name>
        <dbReference type="ChEBI" id="CHEBI:29991"/>
    </ligand>
</feature>
<feature type="binding site" evidence="1">
    <location>
        <position position="239"/>
    </location>
    <ligand>
        <name>L-aspartate</name>
        <dbReference type="ChEBI" id="CHEBI:29991"/>
    </ligand>
</feature>
<feature type="binding site" evidence="1">
    <location>
        <position position="280"/>
    </location>
    <ligand>
        <name>carbamoyl phosphate</name>
        <dbReference type="ChEBI" id="CHEBI:58228"/>
    </ligand>
</feature>
<feature type="binding site" evidence="1">
    <location>
        <position position="281"/>
    </location>
    <ligand>
        <name>carbamoyl phosphate</name>
        <dbReference type="ChEBI" id="CHEBI:58228"/>
    </ligand>
</feature>
<protein>
    <recommendedName>
        <fullName evidence="1">Aspartate carbamoyltransferase catalytic subunit</fullName>
        <ecNumber evidence="1">2.1.3.2</ecNumber>
    </recommendedName>
    <alternativeName>
        <fullName evidence="1">Aspartate transcarbamylase</fullName>
        <shortName evidence="1">ATCase</shortName>
    </alternativeName>
</protein>
<sequence length="323" mass="35120">MPKTFANPQLTKNGELKHLLSIEGLSRDILTDVLDTAQQFVSVSDSDREVKKVPLLRGKSVFNLFFENSTRTRTTFEIAAKRLSADVINLNINASSTSKGESLLDTINNLSAMQADMFVVRHASSGAPYLIAEHVAPHVHVINAGDGRHAHPTQGLLDMFTIRHYKKDFSNLTVAIVGDILHSRVARSDIHALTTLGCAEVRAIGPRTLLPGGLEHMGVRVFHNMEEGLKGVDVVIMLRLQNERMSGALLPSAQEYFKAYGLTQDRLALAKPDAIVMHPGPMNRGVEIDSAVADGVQSVILNQVTFGIAVRMAVMGIVAGNND</sequence>
<evidence type="ECO:0000255" key="1">
    <source>
        <dbReference type="HAMAP-Rule" id="MF_00001"/>
    </source>
</evidence>
<reference key="1">
    <citation type="submission" date="2008-05" db="EMBL/GenBank/DDBJ databases">
        <title>Complete sequence of chromosome 1 of Ralstonia pickettii 12J.</title>
        <authorList>
            <person name="Lucas S."/>
            <person name="Copeland A."/>
            <person name="Lapidus A."/>
            <person name="Glavina del Rio T."/>
            <person name="Dalin E."/>
            <person name="Tice H."/>
            <person name="Bruce D."/>
            <person name="Goodwin L."/>
            <person name="Pitluck S."/>
            <person name="Meincke L."/>
            <person name="Brettin T."/>
            <person name="Detter J.C."/>
            <person name="Han C."/>
            <person name="Kuske C.R."/>
            <person name="Schmutz J."/>
            <person name="Larimer F."/>
            <person name="Land M."/>
            <person name="Hauser L."/>
            <person name="Kyrpides N."/>
            <person name="Mikhailova N."/>
            <person name="Marsh T."/>
            <person name="Richardson P."/>
        </authorList>
    </citation>
    <scope>NUCLEOTIDE SEQUENCE [LARGE SCALE GENOMIC DNA]</scope>
    <source>
        <strain>12J</strain>
    </source>
</reference>
<gene>
    <name evidence="1" type="primary">pyrB</name>
    <name type="ordered locus">Rpic_0622</name>
</gene>
<name>PYRB_RALPJ</name>